<dbReference type="EC" id="5.4.99.20"/>
<dbReference type="EMBL" id="AE014075">
    <property type="protein sequence ID" value="AAN79983.1"/>
    <property type="status" value="ALT_FRAME"/>
    <property type="molecule type" value="Genomic_DNA"/>
</dbReference>
<dbReference type="RefSeq" id="WP_001248695.1">
    <property type="nucleotide sequence ID" value="NZ_CP051263.1"/>
</dbReference>
<dbReference type="SMR" id="Q8FIB6"/>
<dbReference type="STRING" id="199310.c1514"/>
<dbReference type="KEGG" id="ecc:c1514"/>
<dbReference type="eggNOG" id="COG1187">
    <property type="taxonomic scope" value="Bacteria"/>
</dbReference>
<dbReference type="HOGENOM" id="CLU_024979_8_2_6"/>
<dbReference type="Proteomes" id="UP000001410">
    <property type="component" value="Chromosome"/>
</dbReference>
<dbReference type="GO" id="GO:0160137">
    <property type="term" value="F:23S rRNA pseudouridine(2457) synthase activity"/>
    <property type="evidence" value="ECO:0007669"/>
    <property type="project" value="UniProtKB-EC"/>
</dbReference>
<dbReference type="GO" id="GO:0003723">
    <property type="term" value="F:RNA binding"/>
    <property type="evidence" value="ECO:0007669"/>
    <property type="project" value="InterPro"/>
</dbReference>
<dbReference type="GO" id="GO:0001522">
    <property type="term" value="P:pseudouridine synthesis"/>
    <property type="evidence" value="ECO:0007669"/>
    <property type="project" value="InterPro"/>
</dbReference>
<dbReference type="GO" id="GO:0006364">
    <property type="term" value="P:rRNA processing"/>
    <property type="evidence" value="ECO:0007669"/>
    <property type="project" value="UniProtKB-KW"/>
</dbReference>
<dbReference type="CDD" id="cd02566">
    <property type="entry name" value="PseudoU_synth_RluE"/>
    <property type="match status" value="1"/>
</dbReference>
<dbReference type="FunFam" id="3.30.70.1560:FF:000003">
    <property type="entry name" value="Pseudouridine synthase"/>
    <property type="match status" value="1"/>
</dbReference>
<dbReference type="FunFam" id="3.30.70.580:FF:000010">
    <property type="entry name" value="Pseudouridine synthase"/>
    <property type="match status" value="1"/>
</dbReference>
<dbReference type="Gene3D" id="3.30.70.1560">
    <property type="entry name" value="Alpha-L RNA-binding motif"/>
    <property type="match status" value="1"/>
</dbReference>
<dbReference type="Gene3D" id="3.30.70.580">
    <property type="entry name" value="Pseudouridine synthase I, catalytic domain, N-terminal subdomain"/>
    <property type="match status" value="1"/>
</dbReference>
<dbReference type="InterPro" id="IPR042092">
    <property type="entry name" value="PsdUridine_s_RsuA/RluB/E/F_cat"/>
</dbReference>
<dbReference type="InterPro" id="IPR020103">
    <property type="entry name" value="PsdUridine_synth_cat_dom_sf"/>
</dbReference>
<dbReference type="InterPro" id="IPR006145">
    <property type="entry name" value="PsdUridine_synth_RsuA/RluA"/>
</dbReference>
<dbReference type="InterPro" id="IPR000748">
    <property type="entry name" value="PsdUridine_synth_RsuA/RluB/E/F"/>
</dbReference>
<dbReference type="InterPro" id="IPR018496">
    <property type="entry name" value="PsdUridine_synth_RsuA/RluB_CS"/>
</dbReference>
<dbReference type="InterPro" id="IPR050343">
    <property type="entry name" value="RsuA_PseudoU_synthase"/>
</dbReference>
<dbReference type="InterPro" id="IPR020094">
    <property type="entry name" value="TruA/RsuA/RluB/E/F_N"/>
</dbReference>
<dbReference type="NCBIfam" id="NF008487">
    <property type="entry name" value="PRK11394.1"/>
    <property type="match status" value="1"/>
</dbReference>
<dbReference type="NCBIfam" id="TIGR00093">
    <property type="entry name" value="pseudouridine synthase"/>
    <property type="match status" value="1"/>
</dbReference>
<dbReference type="PANTHER" id="PTHR47683">
    <property type="entry name" value="PSEUDOURIDINE SYNTHASE FAMILY PROTEIN-RELATED"/>
    <property type="match status" value="1"/>
</dbReference>
<dbReference type="PANTHER" id="PTHR47683:SF2">
    <property type="entry name" value="RNA-BINDING S4 DOMAIN-CONTAINING PROTEIN"/>
    <property type="match status" value="1"/>
</dbReference>
<dbReference type="Pfam" id="PF00849">
    <property type="entry name" value="PseudoU_synth_2"/>
    <property type="match status" value="1"/>
</dbReference>
<dbReference type="SUPFAM" id="SSF55120">
    <property type="entry name" value="Pseudouridine synthase"/>
    <property type="match status" value="1"/>
</dbReference>
<dbReference type="PROSITE" id="PS01149">
    <property type="entry name" value="PSI_RSU"/>
    <property type="match status" value="1"/>
</dbReference>
<evidence type="ECO:0000250" key="1"/>
<evidence type="ECO:0000305" key="2"/>
<protein>
    <recommendedName>
        <fullName>Ribosomal large subunit pseudouridine synthase E</fullName>
        <ecNumber>5.4.99.20</ecNumber>
    </recommendedName>
    <alternativeName>
        <fullName>rRNA pseudouridylate synthase E</fullName>
    </alternativeName>
    <alternativeName>
        <fullName>rRNA-uridine isomerase E</fullName>
    </alternativeName>
</protein>
<accession>Q8FIB6</accession>
<reference key="1">
    <citation type="journal article" date="2002" name="Proc. Natl. Acad. Sci. U.S.A.">
        <title>Extensive mosaic structure revealed by the complete genome sequence of uropathogenic Escherichia coli.</title>
        <authorList>
            <person name="Welch R.A."/>
            <person name="Burland V."/>
            <person name="Plunkett G. III"/>
            <person name="Redford P."/>
            <person name="Roesch P."/>
            <person name="Rasko D."/>
            <person name="Buckles E.L."/>
            <person name="Liou S.-R."/>
            <person name="Boutin A."/>
            <person name="Hackett J."/>
            <person name="Stroud D."/>
            <person name="Mayhew G.F."/>
            <person name="Rose D.J."/>
            <person name="Zhou S."/>
            <person name="Schwartz D.C."/>
            <person name="Perna N.T."/>
            <person name="Mobley H.L.T."/>
            <person name="Donnenberg M.S."/>
            <person name="Blattner F.R."/>
        </authorList>
    </citation>
    <scope>NUCLEOTIDE SEQUENCE [LARGE SCALE GENOMIC DNA]</scope>
    <source>
        <strain>CFT073 / ATCC 700928 / UPEC</strain>
    </source>
</reference>
<proteinExistence type="inferred from homology"/>
<gene>
    <name type="primary">rluE</name>
    <name type="ordered locus">c1514</name>
</gene>
<name>RLUE_ECOL6</name>
<organism>
    <name type="scientific">Escherichia coli O6:H1 (strain CFT073 / ATCC 700928 / UPEC)</name>
    <dbReference type="NCBI Taxonomy" id="199310"/>
    <lineage>
        <taxon>Bacteria</taxon>
        <taxon>Pseudomonadati</taxon>
        <taxon>Pseudomonadota</taxon>
        <taxon>Gammaproteobacteria</taxon>
        <taxon>Enterobacterales</taxon>
        <taxon>Enterobacteriaceae</taxon>
        <taxon>Escherichia</taxon>
    </lineage>
</organism>
<sequence>MRQFIISENTMQKTSFRNHQVKRFSSQRSTRRKPENQPTRVILFNKPYDVLPQFTDEAGRKTLKEFIPVQGVYAAGRLDRDSEGLLVLTNNGALQARLTQPGKRTGKIYYVQVEGIPTQDALEALRNGVTLNDGPTLPAGAELVEEPAWLWPRNPPIRERKSIPTSWLKITLYEGRNRQVRRMTAHVGFPTLRLIRYAMGDYSLDNLANGEWRDATD</sequence>
<feature type="chain" id="PRO_0000100002" description="Ribosomal large subunit pseudouridine synthase E">
    <location>
        <begin position="1"/>
        <end position="217"/>
    </location>
</feature>
<feature type="active site" description="Nucleophile" evidence="1">
    <location>
        <position position="79"/>
    </location>
</feature>
<keyword id="KW-0413">Isomerase</keyword>
<keyword id="KW-1185">Reference proteome</keyword>
<keyword id="KW-0698">rRNA processing</keyword>
<comment type="function">
    <text evidence="1">Responsible for synthesis of pseudouridine from uracil-2457 in 23S ribosomal RNA.</text>
</comment>
<comment type="catalytic activity">
    <reaction>
        <text>uridine(2457) in 23S rRNA = pseudouridine(2457) in 23S rRNA</text>
        <dbReference type="Rhea" id="RHEA:38871"/>
        <dbReference type="Rhea" id="RHEA-COMP:10091"/>
        <dbReference type="Rhea" id="RHEA-COMP:10092"/>
        <dbReference type="ChEBI" id="CHEBI:65314"/>
        <dbReference type="ChEBI" id="CHEBI:65315"/>
        <dbReference type="EC" id="5.4.99.20"/>
    </reaction>
</comment>
<comment type="similarity">
    <text evidence="2">Belongs to the pseudouridine synthase RsuA family.</text>
</comment>
<comment type="sequence caution" evidence="2">
    <conflict type="frameshift">
        <sequence resource="EMBL-CDS" id="AAN79983"/>
    </conflict>
</comment>